<sequence length="216" mass="23413">MAGRGGAARPNGPAAGNKICQFKLVLLGESAVGKSSLVLRFVKGQFHEYQESTIGAAFLTQTVCLDDTTVKFEIWDTAGQERYHSLAPMYYRGAQAAIVVYDITNTDTFARAKNWVKELQRQASPNIVIALAGNKADLASKRAVEFQEAQAYADDNSLLFMETSAKTAMNVNEIFMAIAKKLPKNEPQNAAGAPGRTRGVDLQESNPASRSQCCSN</sequence>
<feature type="chain" id="PRO_0000121111" description="Ras-related protein Rab-5C">
    <location>
        <begin position="1"/>
        <end position="216"/>
    </location>
</feature>
<feature type="region of interest" description="Disordered" evidence="3">
    <location>
        <begin position="185"/>
        <end position="216"/>
    </location>
</feature>
<feature type="short sequence motif" description="Switch 1" evidence="1">
    <location>
        <begin position="45"/>
        <end position="57"/>
    </location>
</feature>
<feature type="short sequence motif" description="Switch 2" evidence="1">
    <location>
        <begin position="78"/>
        <end position="94"/>
    </location>
</feature>
<feature type="compositionally biased region" description="Polar residues" evidence="3">
    <location>
        <begin position="203"/>
        <end position="216"/>
    </location>
</feature>
<feature type="binding site" evidence="1">
    <location>
        <position position="30"/>
    </location>
    <ligand>
        <name>GTP</name>
        <dbReference type="ChEBI" id="CHEBI:37565"/>
    </ligand>
</feature>
<feature type="binding site" evidence="1">
    <location>
        <position position="31"/>
    </location>
    <ligand>
        <name>GTP</name>
        <dbReference type="ChEBI" id="CHEBI:37565"/>
    </ligand>
</feature>
<feature type="binding site" evidence="1">
    <location>
        <position position="33"/>
    </location>
    <ligand>
        <name>GTP</name>
        <dbReference type="ChEBI" id="CHEBI:37565"/>
    </ligand>
</feature>
<feature type="binding site" evidence="1">
    <location>
        <position position="34"/>
    </location>
    <ligand>
        <name>GTP</name>
        <dbReference type="ChEBI" id="CHEBI:37565"/>
    </ligand>
</feature>
<feature type="binding site" evidence="1">
    <location>
        <position position="35"/>
    </location>
    <ligand>
        <name>GTP</name>
        <dbReference type="ChEBI" id="CHEBI:37565"/>
    </ligand>
</feature>
<feature type="binding site" evidence="1">
    <location>
        <position position="35"/>
    </location>
    <ligand>
        <name>Mg(2+)</name>
        <dbReference type="ChEBI" id="CHEBI:18420"/>
    </ligand>
</feature>
<feature type="binding site" evidence="1">
    <location>
        <position position="36"/>
    </location>
    <ligand>
        <name>GTP</name>
        <dbReference type="ChEBI" id="CHEBI:37565"/>
    </ligand>
</feature>
<feature type="binding site" evidence="1">
    <location>
        <position position="47"/>
    </location>
    <ligand>
        <name>GTP</name>
        <dbReference type="ChEBI" id="CHEBI:37565"/>
    </ligand>
</feature>
<feature type="binding site" evidence="1">
    <location>
        <position position="48"/>
    </location>
    <ligand>
        <name>GTP</name>
        <dbReference type="ChEBI" id="CHEBI:37565"/>
    </ligand>
</feature>
<feature type="binding site" evidence="1">
    <location>
        <position position="53"/>
    </location>
    <ligand>
        <name>GTP</name>
        <dbReference type="ChEBI" id="CHEBI:37565"/>
    </ligand>
</feature>
<feature type="binding site" evidence="1">
    <location>
        <position position="53"/>
    </location>
    <ligand>
        <name>Mg(2+)</name>
        <dbReference type="ChEBI" id="CHEBI:18420"/>
    </ligand>
</feature>
<feature type="binding site" evidence="1">
    <location>
        <position position="79"/>
    </location>
    <ligand>
        <name>GTP</name>
        <dbReference type="ChEBI" id="CHEBI:37565"/>
    </ligand>
</feature>
<feature type="binding site" evidence="1">
    <location>
        <position position="134"/>
    </location>
    <ligand>
        <name>GTP</name>
        <dbReference type="ChEBI" id="CHEBI:37565"/>
    </ligand>
</feature>
<feature type="binding site" evidence="1">
    <location>
        <position position="135"/>
    </location>
    <ligand>
        <name>GTP</name>
        <dbReference type="ChEBI" id="CHEBI:37565"/>
    </ligand>
</feature>
<feature type="binding site" evidence="1">
    <location>
        <position position="137"/>
    </location>
    <ligand>
        <name>GTP</name>
        <dbReference type="ChEBI" id="CHEBI:37565"/>
    </ligand>
</feature>
<feature type="binding site" evidence="1">
    <location>
        <position position="165"/>
    </location>
    <ligand>
        <name>GTP</name>
        <dbReference type="ChEBI" id="CHEBI:37565"/>
    </ligand>
</feature>
<feature type="binding site" evidence="1">
    <location>
        <position position="166"/>
    </location>
    <ligand>
        <name>GTP</name>
        <dbReference type="ChEBI" id="CHEBI:37565"/>
    </ligand>
</feature>
<feature type="modified residue" description="Phosphoserine" evidence="2">
    <location>
        <position position="85"/>
    </location>
</feature>
<feature type="lipid moiety-binding region" description="S-geranylgeranyl cysteine" evidence="1">
    <location>
        <position position="213"/>
    </location>
</feature>
<feature type="lipid moiety-binding region" description="S-geranylgeranyl cysteine" evidence="1">
    <location>
        <position position="214"/>
    </location>
</feature>
<feature type="strand" evidence="6">
    <location>
        <begin position="20"/>
        <end position="29"/>
    </location>
</feature>
<feature type="helix" evidence="6">
    <location>
        <begin position="34"/>
        <end position="43"/>
    </location>
</feature>
<feature type="strand" evidence="6">
    <location>
        <begin position="54"/>
        <end position="65"/>
    </location>
</feature>
<feature type="strand" evidence="6">
    <location>
        <begin position="68"/>
        <end position="77"/>
    </location>
</feature>
<feature type="helix" evidence="6">
    <location>
        <begin position="81"/>
        <end position="86"/>
    </location>
</feature>
<feature type="helix" evidence="6">
    <location>
        <begin position="87"/>
        <end position="91"/>
    </location>
</feature>
<feature type="strand" evidence="6">
    <location>
        <begin position="95"/>
        <end position="102"/>
    </location>
</feature>
<feature type="helix" evidence="6">
    <location>
        <begin position="106"/>
        <end position="122"/>
    </location>
</feature>
<feature type="strand" evidence="6">
    <location>
        <begin position="128"/>
        <end position="134"/>
    </location>
</feature>
<feature type="helix" evidence="6">
    <location>
        <begin position="139"/>
        <end position="141"/>
    </location>
</feature>
<feature type="helix" evidence="6">
    <location>
        <begin position="146"/>
        <end position="155"/>
    </location>
</feature>
<feature type="strand" evidence="6">
    <location>
        <begin position="159"/>
        <end position="162"/>
    </location>
</feature>
<feature type="turn" evidence="6">
    <location>
        <begin position="165"/>
        <end position="167"/>
    </location>
</feature>
<feature type="helix" evidence="6">
    <location>
        <begin position="171"/>
        <end position="181"/>
    </location>
</feature>
<dbReference type="EC" id="3.6.5.2" evidence="1"/>
<dbReference type="EMBL" id="BC023027">
    <property type="protein sequence ID" value="AAH23027.1"/>
    <property type="molecule type" value="mRNA"/>
</dbReference>
<dbReference type="EMBL" id="BC027378">
    <property type="protein sequence ID" value="AAH27378.1"/>
    <property type="molecule type" value="mRNA"/>
</dbReference>
<dbReference type="EMBL" id="BC029678">
    <property type="protein sequence ID" value="AAH29678.1"/>
    <property type="molecule type" value="mRNA"/>
</dbReference>
<dbReference type="EMBL" id="M79312">
    <property type="protein sequence ID" value="AAK14836.1"/>
    <property type="molecule type" value="mRNA"/>
</dbReference>
<dbReference type="CCDS" id="CCDS36333.1"/>
<dbReference type="PIR" id="JH0641">
    <property type="entry name" value="JH0641"/>
</dbReference>
<dbReference type="RefSeq" id="NP_077776.2">
    <property type="nucleotide sequence ID" value="NM_024456.5"/>
</dbReference>
<dbReference type="RefSeq" id="XP_036012347.1">
    <property type="nucleotide sequence ID" value="XM_036156454.1"/>
</dbReference>
<dbReference type="PDB" id="1HUQ">
    <property type="method" value="X-ray"/>
    <property type="resolution" value="1.80 A"/>
    <property type="chains" value="A=19-182"/>
</dbReference>
<dbReference type="PDB" id="1Z07">
    <property type="method" value="X-ray"/>
    <property type="resolution" value="1.81 A"/>
    <property type="chains" value="A=19-182"/>
</dbReference>
<dbReference type="PDB" id="1Z0D">
    <property type="method" value="X-ray"/>
    <property type="resolution" value="2.20 A"/>
    <property type="chains" value="A/C=19-183"/>
</dbReference>
<dbReference type="PDBsum" id="1HUQ"/>
<dbReference type="PDBsum" id="1Z07"/>
<dbReference type="PDBsum" id="1Z0D"/>
<dbReference type="SMR" id="P35278"/>
<dbReference type="BioGRID" id="202549">
    <property type="interactions" value="130"/>
</dbReference>
<dbReference type="DIP" id="DIP-56521N"/>
<dbReference type="FunCoup" id="P35278">
    <property type="interactions" value="3916"/>
</dbReference>
<dbReference type="IntAct" id="P35278">
    <property type="interactions" value="140"/>
</dbReference>
<dbReference type="MINT" id="P35278"/>
<dbReference type="STRING" id="10090.ENSMUSP00000019317"/>
<dbReference type="GlyGen" id="P35278">
    <property type="glycosylation" value="1 site, 1 O-linked glycan (1 site)"/>
</dbReference>
<dbReference type="iPTMnet" id="P35278"/>
<dbReference type="PhosphoSitePlus" id="P35278"/>
<dbReference type="SwissPalm" id="P35278"/>
<dbReference type="jPOST" id="P35278"/>
<dbReference type="PaxDb" id="10090-ENSMUSP00000019317"/>
<dbReference type="PeptideAtlas" id="P35278"/>
<dbReference type="ProteomicsDB" id="300228"/>
<dbReference type="Pumba" id="P35278"/>
<dbReference type="Antibodypedia" id="1113">
    <property type="antibodies" value="237 antibodies from 30 providers"/>
</dbReference>
<dbReference type="DNASU" id="19345"/>
<dbReference type="Ensembl" id="ENSMUST00000107364.8">
    <property type="protein sequence ID" value="ENSMUSP00000102987.2"/>
    <property type="gene ID" value="ENSMUSG00000019173.12"/>
</dbReference>
<dbReference type="GeneID" id="19345"/>
<dbReference type="KEGG" id="mmu:19345"/>
<dbReference type="UCSC" id="uc007lme.2">
    <property type="organism name" value="mouse"/>
</dbReference>
<dbReference type="AGR" id="MGI:105306"/>
<dbReference type="CTD" id="5878"/>
<dbReference type="MGI" id="MGI:105306">
    <property type="gene designation" value="Rab5c"/>
</dbReference>
<dbReference type="VEuPathDB" id="HostDB:ENSMUSG00000019173"/>
<dbReference type="eggNOG" id="KOG0092">
    <property type="taxonomic scope" value="Eukaryota"/>
</dbReference>
<dbReference type="GeneTree" id="ENSGT00940000154971"/>
<dbReference type="HOGENOM" id="CLU_041217_10_2_1"/>
<dbReference type="InParanoid" id="P35278"/>
<dbReference type="OMA" id="GGPNKTC"/>
<dbReference type="OrthoDB" id="63533at2759"/>
<dbReference type="Reactome" id="R-MMU-432722">
    <property type="pathway name" value="Golgi Associated Vesicle Biogenesis"/>
</dbReference>
<dbReference type="Reactome" id="R-MMU-6798695">
    <property type="pathway name" value="Neutrophil degranulation"/>
</dbReference>
<dbReference type="Reactome" id="R-MMU-8856828">
    <property type="pathway name" value="Clathrin-mediated endocytosis"/>
</dbReference>
<dbReference type="Reactome" id="R-MMU-8873719">
    <property type="pathway name" value="RAB geranylgeranylation"/>
</dbReference>
<dbReference type="Reactome" id="R-MMU-8876198">
    <property type="pathway name" value="RAB GEFs exchange GTP for GDP on RABs"/>
</dbReference>
<dbReference type="BioGRID-ORCS" id="19345">
    <property type="hits" value="11 hits in 61 CRISPR screens"/>
</dbReference>
<dbReference type="ChiTaRS" id="Rab5c">
    <property type="organism name" value="mouse"/>
</dbReference>
<dbReference type="EvolutionaryTrace" id="P35278"/>
<dbReference type="PRO" id="PR:P35278"/>
<dbReference type="Proteomes" id="UP000000589">
    <property type="component" value="Chromosome 11"/>
</dbReference>
<dbReference type="RNAct" id="P35278">
    <property type="molecule type" value="protein"/>
</dbReference>
<dbReference type="Bgee" id="ENSMUSG00000019173">
    <property type="expression patterns" value="Expressed in embryonic brain and 250 other cell types or tissues"/>
</dbReference>
<dbReference type="ExpressionAtlas" id="P35278">
    <property type="expression patterns" value="baseline and differential"/>
</dbReference>
<dbReference type="GO" id="GO:0031901">
    <property type="term" value="C:early endosome membrane"/>
    <property type="evidence" value="ECO:0007669"/>
    <property type="project" value="UniProtKB-SubCell"/>
</dbReference>
<dbReference type="GO" id="GO:0030139">
    <property type="term" value="C:endocytic vesicle"/>
    <property type="evidence" value="ECO:0000314"/>
    <property type="project" value="MGI"/>
</dbReference>
<dbReference type="GO" id="GO:0005811">
    <property type="term" value="C:lipid droplet"/>
    <property type="evidence" value="ECO:0007669"/>
    <property type="project" value="Ensembl"/>
</dbReference>
<dbReference type="GO" id="GO:0042470">
    <property type="term" value="C:melanosome"/>
    <property type="evidence" value="ECO:0007669"/>
    <property type="project" value="UniProtKB-SubCell"/>
</dbReference>
<dbReference type="GO" id="GO:0005886">
    <property type="term" value="C:plasma membrane"/>
    <property type="evidence" value="ECO:0007669"/>
    <property type="project" value="UniProtKB-SubCell"/>
</dbReference>
<dbReference type="GO" id="GO:0003925">
    <property type="term" value="F:G protein activity"/>
    <property type="evidence" value="ECO:0007669"/>
    <property type="project" value="UniProtKB-EC"/>
</dbReference>
<dbReference type="GO" id="GO:0019003">
    <property type="term" value="F:GDP binding"/>
    <property type="evidence" value="ECO:0000250"/>
    <property type="project" value="UniProtKB"/>
</dbReference>
<dbReference type="GO" id="GO:0005525">
    <property type="term" value="F:GTP binding"/>
    <property type="evidence" value="ECO:0007669"/>
    <property type="project" value="UniProtKB-KW"/>
</dbReference>
<dbReference type="GO" id="GO:0003924">
    <property type="term" value="F:GTPase activity"/>
    <property type="evidence" value="ECO:0000304"/>
    <property type="project" value="MGI"/>
</dbReference>
<dbReference type="GO" id="GO:0007032">
    <property type="term" value="P:endosome organization"/>
    <property type="evidence" value="ECO:0000314"/>
    <property type="project" value="MGI"/>
</dbReference>
<dbReference type="GO" id="GO:0048227">
    <property type="term" value="P:plasma membrane to endosome transport"/>
    <property type="evidence" value="ECO:0007669"/>
    <property type="project" value="Ensembl"/>
</dbReference>
<dbReference type="GO" id="GO:0015031">
    <property type="term" value="P:protein transport"/>
    <property type="evidence" value="ECO:0007669"/>
    <property type="project" value="UniProtKB-KW"/>
</dbReference>
<dbReference type="GO" id="GO:0030100">
    <property type="term" value="P:regulation of endocytosis"/>
    <property type="evidence" value="ECO:0000314"/>
    <property type="project" value="MGI"/>
</dbReference>
<dbReference type="CDD" id="cd01860">
    <property type="entry name" value="Rab5_related"/>
    <property type="match status" value="1"/>
</dbReference>
<dbReference type="FunFam" id="3.40.50.300:FF:000180">
    <property type="entry name" value="Member RAS oncogene family"/>
    <property type="match status" value="1"/>
</dbReference>
<dbReference type="Gene3D" id="3.40.50.300">
    <property type="entry name" value="P-loop containing nucleotide triphosphate hydrolases"/>
    <property type="match status" value="1"/>
</dbReference>
<dbReference type="InterPro" id="IPR027417">
    <property type="entry name" value="P-loop_NTPase"/>
</dbReference>
<dbReference type="InterPro" id="IPR005225">
    <property type="entry name" value="Small_GTP-bd"/>
</dbReference>
<dbReference type="InterPro" id="IPR001806">
    <property type="entry name" value="Small_GTPase"/>
</dbReference>
<dbReference type="NCBIfam" id="TIGR00231">
    <property type="entry name" value="small_GTP"/>
    <property type="match status" value="1"/>
</dbReference>
<dbReference type="PANTHER" id="PTHR47978">
    <property type="match status" value="1"/>
</dbReference>
<dbReference type="Pfam" id="PF00071">
    <property type="entry name" value="Ras"/>
    <property type="match status" value="1"/>
</dbReference>
<dbReference type="PRINTS" id="PR00449">
    <property type="entry name" value="RASTRNSFRMNG"/>
</dbReference>
<dbReference type="SMART" id="SM00175">
    <property type="entry name" value="RAB"/>
    <property type="match status" value="1"/>
</dbReference>
<dbReference type="SMART" id="SM00176">
    <property type="entry name" value="RAN"/>
    <property type="match status" value="1"/>
</dbReference>
<dbReference type="SMART" id="SM00173">
    <property type="entry name" value="RAS"/>
    <property type="match status" value="1"/>
</dbReference>
<dbReference type="SMART" id="SM00174">
    <property type="entry name" value="RHO"/>
    <property type="match status" value="1"/>
</dbReference>
<dbReference type="SUPFAM" id="SSF52540">
    <property type="entry name" value="P-loop containing nucleoside triphosphate hydrolases"/>
    <property type="match status" value="1"/>
</dbReference>
<dbReference type="PROSITE" id="PS51419">
    <property type="entry name" value="RAB"/>
    <property type="match status" value="1"/>
</dbReference>
<evidence type="ECO:0000250" key="1">
    <source>
        <dbReference type="UniProtKB" id="P20339"/>
    </source>
</evidence>
<evidence type="ECO:0000250" key="2">
    <source>
        <dbReference type="UniProtKB" id="P51148"/>
    </source>
</evidence>
<evidence type="ECO:0000256" key="3">
    <source>
        <dbReference type="SAM" id="MobiDB-lite"/>
    </source>
</evidence>
<evidence type="ECO:0000305" key="4"/>
<evidence type="ECO:0000312" key="5">
    <source>
        <dbReference type="MGI" id="MGI:105306"/>
    </source>
</evidence>
<evidence type="ECO:0007829" key="6">
    <source>
        <dbReference type="PDB" id="1HUQ"/>
    </source>
</evidence>
<comment type="function">
    <text evidence="1">The small GTPases Rab are key regulators of intracellular membrane trafficking, from the formation of transport vesicles to their fusion with membranes. Rabs cycle between an inactive GDP-bound form and an active GTP-bound form that is able to recruit to membranes different sets of downstream effectors directly responsible for vesicle formation, movement, tethering and fusion.</text>
</comment>
<comment type="catalytic activity">
    <reaction evidence="1">
        <text>GTP + H2O = GDP + phosphate + H(+)</text>
        <dbReference type="Rhea" id="RHEA:19669"/>
        <dbReference type="ChEBI" id="CHEBI:15377"/>
        <dbReference type="ChEBI" id="CHEBI:15378"/>
        <dbReference type="ChEBI" id="CHEBI:37565"/>
        <dbReference type="ChEBI" id="CHEBI:43474"/>
        <dbReference type="ChEBI" id="CHEBI:58189"/>
        <dbReference type="EC" id="3.6.5.2"/>
    </reaction>
    <physiologicalReaction direction="left-to-right" evidence="1">
        <dbReference type="Rhea" id="RHEA:19670"/>
    </physiologicalReaction>
</comment>
<comment type="cofactor">
    <cofactor evidence="1">
        <name>Mg(2+)</name>
        <dbReference type="ChEBI" id="CHEBI:18420"/>
    </cofactor>
</comment>
<comment type="activity regulation">
    <text evidence="4">Regulated by guanine nucleotide exchange factors (GEFs) which promote the exchange of bound GDP for free GTP (Probable). Regulated by GTPase activating proteins (GAPs) which increase the GTP hydrolysis activity (Probable). Inhibited by GDP dissociation inhibitors (GDIs) (Probable).</text>
</comment>
<comment type="subunit">
    <text evidence="2">Interacts with EEA1 and INCA1 (By similarity). Interacts with GDI1, GDI2, CHML and CHM; phosphorylation at Ser-85 disrupts this interaction (By similarity).</text>
</comment>
<comment type="subcellular location">
    <subcellularLocation>
        <location evidence="1">Cell membrane</location>
        <topology evidence="1">Lipid-anchor</topology>
        <orientation evidence="1">Cytoplasmic side</orientation>
    </subcellularLocation>
    <subcellularLocation>
        <location evidence="1">Early endosome membrane</location>
        <topology evidence="1">Lipid-anchor</topology>
    </subcellularLocation>
    <subcellularLocation>
        <location evidence="2">Melanosome</location>
    </subcellularLocation>
</comment>
<comment type="domain">
    <text evidence="1">Switch 1, switch 2 and the interswitch regions are characteristic of Rab GTPases and mediate the interactions with Rab downstream effectors. The switch regions undergo conformational changes upon nucleotide binding which drive interaction with specific sets of effector proteins, with most effectors only binding to GTP-bound Rab.</text>
</comment>
<comment type="PTM">
    <text evidence="2">Phosphorylation of Ser-85 in the switch II region by LRRK2 prevents the association of RAB regulatory proteins, including CHM, CHML and RAB GDP dissociation inhibitors GDI1 and GDI2.</text>
</comment>
<comment type="similarity">
    <text evidence="4">Belongs to the small GTPase superfamily. Rab family.</text>
</comment>
<reference key="1">
    <citation type="journal article" date="2004" name="Genome Res.">
        <title>The status, quality, and expansion of the NIH full-length cDNA project: the Mammalian Gene Collection (MGC).</title>
        <authorList>
            <consortium name="The MGC Project Team"/>
        </authorList>
    </citation>
    <scope>NUCLEOTIDE SEQUENCE [LARGE SCALE MRNA]</scope>
    <source>
        <tissue>Eye</tissue>
        <tissue>Retina</tissue>
    </source>
</reference>
<reference key="2">
    <citation type="submission" date="2007-04" db="UniProtKB">
        <authorList>
            <person name="Lubec G."/>
            <person name="Kang S.U."/>
        </authorList>
    </citation>
    <scope>PROTEIN SEQUENCE OF 24-34; 83-111; 122-135; 185-196 AND 199-210</scope>
    <scope>IDENTIFICATION BY MASS SPECTROMETRY</scope>
    <source>
        <strain>C57BL/6J</strain>
        <tissue>Brain</tissue>
    </source>
</reference>
<reference key="3">
    <citation type="journal article" date="1992" name="Gene">
        <title>The complexity of the Rab and Rho GTP-binding protein subfamilies revealed by a PCR cloning approach.</title>
        <authorList>
            <person name="Chavrier P."/>
            <person name="Simons K."/>
            <person name="Zerial M."/>
        </authorList>
    </citation>
    <scope>NUCLEOTIDE SEQUENCE [MRNA] OF 33-81</scope>
    <source>
        <tissue>Kidney</tissue>
    </source>
</reference>
<reference key="4">
    <citation type="journal article" date="2010" name="Cell">
        <title>A tissue-specific atlas of mouse protein phosphorylation and expression.</title>
        <authorList>
            <person name="Huttlin E.L."/>
            <person name="Jedrychowski M.P."/>
            <person name="Elias J.E."/>
            <person name="Goswami T."/>
            <person name="Rad R."/>
            <person name="Beausoleil S.A."/>
            <person name="Villen J."/>
            <person name="Haas W."/>
            <person name="Sowa M.E."/>
            <person name="Gygi S.P."/>
        </authorList>
    </citation>
    <scope>IDENTIFICATION BY MASS SPECTROMETRY [LARGE SCALE ANALYSIS]</scope>
    <source>
        <tissue>Brain</tissue>
        <tissue>Brown adipose tissue</tissue>
        <tissue>Heart</tissue>
        <tissue>Kidney</tissue>
        <tissue>Liver</tissue>
        <tissue>Lung</tissue>
        <tissue>Pancreas</tissue>
        <tissue>Spleen</tissue>
        <tissue>Testis</tissue>
    </source>
</reference>
<reference key="5">
    <citation type="journal article" date="2001" name="J. Biol. Chem.">
        <title>Structural plasticity of an invariant hydrophobic triad in the switch regions of Rab GTPases is a determinant of effector recognition.</title>
        <authorList>
            <person name="Merithew E."/>
            <person name="Hatherly S."/>
            <person name="Dumas J.J."/>
            <person name="Lawe D.C."/>
            <person name="Heller-Harrison R."/>
            <person name="Lambright D.G."/>
        </authorList>
    </citation>
    <scope>X-RAY CRYSTALLOGRAPHY (1.8 ANGSTROMS) OF 19-182</scope>
</reference>
<organism>
    <name type="scientific">Mus musculus</name>
    <name type="common">Mouse</name>
    <dbReference type="NCBI Taxonomy" id="10090"/>
    <lineage>
        <taxon>Eukaryota</taxon>
        <taxon>Metazoa</taxon>
        <taxon>Chordata</taxon>
        <taxon>Craniata</taxon>
        <taxon>Vertebrata</taxon>
        <taxon>Euteleostomi</taxon>
        <taxon>Mammalia</taxon>
        <taxon>Eutheria</taxon>
        <taxon>Euarchontoglires</taxon>
        <taxon>Glires</taxon>
        <taxon>Rodentia</taxon>
        <taxon>Myomorpha</taxon>
        <taxon>Muroidea</taxon>
        <taxon>Muridae</taxon>
        <taxon>Murinae</taxon>
        <taxon>Mus</taxon>
        <taxon>Mus</taxon>
    </lineage>
</organism>
<keyword id="KW-0002">3D-structure</keyword>
<keyword id="KW-1003">Cell membrane</keyword>
<keyword id="KW-0903">Direct protein sequencing</keyword>
<keyword id="KW-0967">Endosome</keyword>
<keyword id="KW-0342">GTP-binding</keyword>
<keyword id="KW-0378">Hydrolase</keyword>
<keyword id="KW-0449">Lipoprotein</keyword>
<keyword id="KW-0460">Magnesium</keyword>
<keyword id="KW-0472">Membrane</keyword>
<keyword id="KW-0479">Metal-binding</keyword>
<keyword id="KW-0547">Nucleotide-binding</keyword>
<keyword id="KW-0597">Phosphoprotein</keyword>
<keyword id="KW-0636">Prenylation</keyword>
<keyword id="KW-0653">Protein transport</keyword>
<keyword id="KW-1185">Reference proteome</keyword>
<keyword id="KW-0813">Transport</keyword>
<proteinExistence type="evidence at protein level"/>
<accession>P35278</accession>
<accession>Q8R1V8</accession>
<accession>Q8R2N8</accession>
<protein>
    <recommendedName>
        <fullName>Ras-related protein Rab-5C</fullName>
        <ecNumber evidence="1">3.6.5.2</ecNumber>
    </recommendedName>
</protein>
<gene>
    <name evidence="5" type="primary">Rab5c</name>
</gene>
<name>RAB5C_MOUSE</name>